<reference key="1">
    <citation type="journal article" date="2004" name="Genome Res.">
        <title>The status, quality, and expansion of the NIH full-length cDNA project: the Mammalian Gene Collection (MGC).</title>
        <authorList>
            <consortium name="The MGC Project Team"/>
        </authorList>
    </citation>
    <scope>NUCLEOTIDE SEQUENCE [LARGE SCALE MRNA]</scope>
    <source>
        <tissue>Kidney</tissue>
    </source>
</reference>
<feature type="transit peptide" description="Mitochondrion" evidence="3">
    <location>
        <begin position="1"/>
        <end status="unknown"/>
    </location>
</feature>
<feature type="chain" id="PRO_0000254588" description="Threonine--tRNA ligase, mitochondrial">
    <location>
        <begin status="unknown"/>
        <end position="723"/>
    </location>
</feature>
<feature type="domain" description="TGS" evidence="4">
    <location>
        <begin position="64"/>
        <end position="126"/>
    </location>
</feature>
<feature type="modified residue" description="Phosphoserine" evidence="2">
    <location>
        <position position="57"/>
    </location>
</feature>
<name>SYTM_RAT</name>
<dbReference type="EC" id="6.1.1.3" evidence="2"/>
<dbReference type="EMBL" id="BC079154">
    <property type="protein sequence ID" value="AAH79154.1"/>
    <property type="molecule type" value="mRNA"/>
</dbReference>
<dbReference type="RefSeq" id="NP_001014062.1">
    <property type="nucleotide sequence ID" value="NM_001014040.1"/>
</dbReference>
<dbReference type="RefSeq" id="XP_008759530.1">
    <property type="nucleotide sequence ID" value="XM_008761308.2"/>
</dbReference>
<dbReference type="SMR" id="Q68FW7"/>
<dbReference type="FunCoup" id="Q68FW7">
    <property type="interactions" value="694"/>
</dbReference>
<dbReference type="STRING" id="10116.ENSRNOP00000072886"/>
<dbReference type="GlyGen" id="Q68FW7">
    <property type="glycosylation" value="1 site"/>
</dbReference>
<dbReference type="iPTMnet" id="Q68FW7"/>
<dbReference type="PhosphoSitePlus" id="Q68FW7"/>
<dbReference type="jPOST" id="Q68FW7"/>
<dbReference type="PaxDb" id="10116-ENSRNOP00000044548"/>
<dbReference type="Ensembl" id="ENSRNOT00000087052.2">
    <property type="protein sequence ID" value="ENSRNOP00000072886.1"/>
    <property type="gene ID" value="ENSRNOG00000057194.2"/>
</dbReference>
<dbReference type="GeneID" id="310672"/>
<dbReference type="KEGG" id="rno:310672"/>
<dbReference type="UCSC" id="RGD:1308283">
    <property type="organism name" value="rat"/>
</dbReference>
<dbReference type="AGR" id="RGD:1308283"/>
<dbReference type="CTD" id="80222"/>
<dbReference type="RGD" id="1308283">
    <property type="gene designation" value="Tars2"/>
</dbReference>
<dbReference type="eggNOG" id="KOG1637">
    <property type="taxonomic scope" value="Eukaryota"/>
</dbReference>
<dbReference type="GeneTree" id="ENSGT00940000161600"/>
<dbReference type="HOGENOM" id="CLU_008554_0_3_1"/>
<dbReference type="InParanoid" id="Q68FW7"/>
<dbReference type="OMA" id="PILEQTC"/>
<dbReference type="OrthoDB" id="5423599at2759"/>
<dbReference type="PhylomeDB" id="Q68FW7"/>
<dbReference type="PRO" id="PR:Q68FW7"/>
<dbReference type="Proteomes" id="UP000002494">
    <property type="component" value="Chromosome 2"/>
</dbReference>
<dbReference type="Bgee" id="ENSRNOG00000057194">
    <property type="expression patterns" value="Expressed in skeletal muscle tissue and 20 other cell types or tissues"/>
</dbReference>
<dbReference type="GO" id="GO:0005759">
    <property type="term" value="C:mitochondrial matrix"/>
    <property type="evidence" value="ECO:0007669"/>
    <property type="project" value="UniProtKB-SubCell"/>
</dbReference>
<dbReference type="GO" id="GO:0005739">
    <property type="term" value="C:mitochondrion"/>
    <property type="evidence" value="ECO:0000318"/>
    <property type="project" value="GO_Central"/>
</dbReference>
<dbReference type="GO" id="GO:0002161">
    <property type="term" value="F:aminoacyl-tRNA deacylase activity"/>
    <property type="evidence" value="ECO:0000250"/>
    <property type="project" value="UniProtKB"/>
</dbReference>
<dbReference type="GO" id="GO:0005524">
    <property type="term" value="F:ATP binding"/>
    <property type="evidence" value="ECO:0007669"/>
    <property type="project" value="UniProtKB-KW"/>
</dbReference>
<dbReference type="GO" id="GO:0042803">
    <property type="term" value="F:protein homodimerization activity"/>
    <property type="evidence" value="ECO:0000250"/>
    <property type="project" value="UniProtKB"/>
</dbReference>
<dbReference type="GO" id="GO:0004829">
    <property type="term" value="F:threonine-tRNA ligase activity"/>
    <property type="evidence" value="ECO:0000250"/>
    <property type="project" value="UniProtKB"/>
</dbReference>
<dbReference type="GO" id="GO:0006435">
    <property type="term" value="P:threonyl-tRNA aminoacylation"/>
    <property type="evidence" value="ECO:0000318"/>
    <property type="project" value="GO_Central"/>
</dbReference>
<dbReference type="CDD" id="cd01667">
    <property type="entry name" value="TGS_ThrRS"/>
    <property type="match status" value="1"/>
</dbReference>
<dbReference type="CDD" id="cd00860">
    <property type="entry name" value="ThrRS_anticodon"/>
    <property type="match status" value="1"/>
</dbReference>
<dbReference type="CDD" id="cd00771">
    <property type="entry name" value="ThrRS_core"/>
    <property type="match status" value="1"/>
</dbReference>
<dbReference type="FunFam" id="3.40.50.800:FF:000003">
    <property type="entry name" value="Threonine--tRNA ligase 2, cytoplasmic"/>
    <property type="match status" value="1"/>
</dbReference>
<dbReference type="FunFam" id="3.10.20.30:FF:000006">
    <property type="entry name" value="Threonine--tRNA ligase, cytoplasmic"/>
    <property type="match status" value="1"/>
</dbReference>
<dbReference type="FunFam" id="3.30.930.10:FF:000039">
    <property type="entry name" value="Threonyl-tRNA synthetase, mitochondrial"/>
    <property type="match status" value="1"/>
</dbReference>
<dbReference type="FunFam" id="3.30.980.10:FF:000005">
    <property type="entry name" value="Threonyl-tRNA synthetase, mitochondrial"/>
    <property type="match status" value="1"/>
</dbReference>
<dbReference type="Gene3D" id="3.10.20.30">
    <property type="match status" value="1"/>
</dbReference>
<dbReference type="Gene3D" id="3.40.50.800">
    <property type="entry name" value="Anticodon-binding domain"/>
    <property type="match status" value="1"/>
</dbReference>
<dbReference type="Gene3D" id="3.30.930.10">
    <property type="entry name" value="Bira Bifunctional Protein, Domain 2"/>
    <property type="match status" value="1"/>
</dbReference>
<dbReference type="Gene3D" id="3.30.980.10">
    <property type="entry name" value="Threonyl-trna Synthetase, Chain A, domain 2"/>
    <property type="match status" value="1"/>
</dbReference>
<dbReference type="HAMAP" id="MF_00184">
    <property type="entry name" value="Thr_tRNA_synth"/>
    <property type="match status" value="1"/>
</dbReference>
<dbReference type="InterPro" id="IPR002314">
    <property type="entry name" value="aa-tRNA-synt_IIb"/>
</dbReference>
<dbReference type="InterPro" id="IPR006195">
    <property type="entry name" value="aa-tRNA-synth_II"/>
</dbReference>
<dbReference type="InterPro" id="IPR045864">
    <property type="entry name" value="aa-tRNA-synth_II/BPL/LPL"/>
</dbReference>
<dbReference type="InterPro" id="IPR004154">
    <property type="entry name" value="Anticodon-bd"/>
</dbReference>
<dbReference type="InterPro" id="IPR036621">
    <property type="entry name" value="Anticodon-bd_dom_sf"/>
</dbReference>
<dbReference type="InterPro" id="IPR012675">
    <property type="entry name" value="Beta-grasp_dom_sf"/>
</dbReference>
<dbReference type="InterPro" id="IPR004095">
    <property type="entry name" value="TGS"/>
</dbReference>
<dbReference type="InterPro" id="IPR012676">
    <property type="entry name" value="TGS-like"/>
</dbReference>
<dbReference type="InterPro" id="IPR002320">
    <property type="entry name" value="Thr-tRNA-ligase_IIa"/>
</dbReference>
<dbReference type="InterPro" id="IPR018163">
    <property type="entry name" value="Thr/Ala-tRNA-synth_IIc_edit"/>
</dbReference>
<dbReference type="InterPro" id="IPR047246">
    <property type="entry name" value="ThrRS_anticodon"/>
</dbReference>
<dbReference type="InterPro" id="IPR033728">
    <property type="entry name" value="ThrRS_core"/>
</dbReference>
<dbReference type="InterPro" id="IPR012947">
    <property type="entry name" value="tRNA_SAD"/>
</dbReference>
<dbReference type="NCBIfam" id="TIGR00418">
    <property type="entry name" value="thrS"/>
    <property type="match status" value="1"/>
</dbReference>
<dbReference type="PANTHER" id="PTHR11451:SF27">
    <property type="entry name" value="THREONINE--TRNA LIGASE, MITOCHONDRIAL"/>
    <property type="match status" value="1"/>
</dbReference>
<dbReference type="PANTHER" id="PTHR11451">
    <property type="entry name" value="THREONINE-TRNA LIGASE"/>
    <property type="match status" value="1"/>
</dbReference>
<dbReference type="Pfam" id="PF03129">
    <property type="entry name" value="HGTP_anticodon"/>
    <property type="match status" value="1"/>
</dbReference>
<dbReference type="Pfam" id="PF02824">
    <property type="entry name" value="TGS"/>
    <property type="match status" value="1"/>
</dbReference>
<dbReference type="Pfam" id="PF00587">
    <property type="entry name" value="tRNA-synt_2b"/>
    <property type="match status" value="1"/>
</dbReference>
<dbReference type="Pfam" id="PF07973">
    <property type="entry name" value="tRNA_SAD"/>
    <property type="match status" value="1"/>
</dbReference>
<dbReference type="PRINTS" id="PR01047">
    <property type="entry name" value="TRNASYNTHTHR"/>
</dbReference>
<dbReference type="SMART" id="SM00863">
    <property type="entry name" value="tRNA_SAD"/>
    <property type="match status" value="1"/>
</dbReference>
<dbReference type="SUPFAM" id="SSF52954">
    <property type="entry name" value="Class II aaRS ABD-related"/>
    <property type="match status" value="1"/>
</dbReference>
<dbReference type="SUPFAM" id="SSF55681">
    <property type="entry name" value="Class II aaRS and biotin synthetases"/>
    <property type="match status" value="1"/>
</dbReference>
<dbReference type="SUPFAM" id="SSF81271">
    <property type="entry name" value="TGS-like"/>
    <property type="match status" value="1"/>
</dbReference>
<dbReference type="SUPFAM" id="SSF55186">
    <property type="entry name" value="ThrRS/AlaRS common domain"/>
    <property type="match status" value="1"/>
</dbReference>
<dbReference type="PROSITE" id="PS50862">
    <property type="entry name" value="AA_TRNA_LIGASE_II"/>
    <property type="match status" value="1"/>
</dbReference>
<dbReference type="PROSITE" id="PS51880">
    <property type="entry name" value="TGS"/>
    <property type="match status" value="1"/>
</dbReference>
<gene>
    <name type="primary">Tars2</name>
    <name type="synonym">Tarsl1</name>
</gene>
<evidence type="ECO:0000250" key="1"/>
<evidence type="ECO:0000250" key="2">
    <source>
        <dbReference type="UniProtKB" id="Q9BW92"/>
    </source>
</evidence>
<evidence type="ECO:0000255" key="3"/>
<evidence type="ECO:0000255" key="4">
    <source>
        <dbReference type="PROSITE-ProRule" id="PRU01228"/>
    </source>
</evidence>
<evidence type="ECO:0000305" key="5"/>
<proteinExistence type="evidence at transcript level"/>
<accession>Q68FW7</accession>
<organism>
    <name type="scientific">Rattus norvegicus</name>
    <name type="common">Rat</name>
    <dbReference type="NCBI Taxonomy" id="10116"/>
    <lineage>
        <taxon>Eukaryota</taxon>
        <taxon>Metazoa</taxon>
        <taxon>Chordata</taxon>
        <taxon>Craniata</taxon>
        <taxon>Vertebrata</taxon>
        <taxon>Euteleostomi</taxon>
        <taxon>Mammalia</taxon>
        <taxon>Eutheria</taxon>
        <taxon>Euarchontoglires</taxon>
        <taxon>Glires</taxon>
        <taxon>Rodentia</taxon>
        <taxon>Myomorpha</taxon>
        <taxon>Muroidea</taxon>
        <taxon>Muridae</taxon>
        <taxon>Murinae</taxon>
        <taxon>Rattus</taxon>
    </lineage>
</organism>
<keyword id="KW-0030">Aminoacyl-tRNA synthetase</keyword>
<keyword id="KW-0067">ATP-binding</keyword>
<keyword id="KW-0436">Ligase</keyword>
<keyword id="KW-0496">Mitochondrion</keyword>
<keyword id="KW-0547">Nucleotide-binding</keyword>
<keyword id="KW-0597">Phosphoprotein</keyword>
<keyword id="KW-0648">Protein biosynthesis</keyword>
<keyword id="KW-1185">Reference proteome</keyword>
<keyword id="KW-0809">Transit peptide</keyword>
<sequence>MGLCLRWRRLGFPLPGFRRCELHTVREAPIPTPPHWLAERFGLFEELWTAQVKRLASMTQKKARTIKISLPEGQKVDAVAWNTTPYQLAQQISSTLADTAVAAEVNGELYDLDRPLETDCHLRFLTFDSPEGKAVFWRSSAHVLGAAAEQHLGAVLCRGPSTESGFYLDFFLGKERTVRSTELPTLERICQEIITAAQPFRRLEASRGQLRQLFKDNHFKLHVIEEKVTGTTATVYGCGMSVDLCQGPHLRHTGQIGALKLLTNSSALWRSSEAPETLQRVSGISFPKAELLRNWEARREEAELRDHRRIGKEQELFFFHELSPGSCFFLPRGTRIYNALVAFIRAEYARRGFSEVKTPTLFSTKLWEQSGHWEHYRAHMFSLKPPGTDGVDSSQSGHPARCPKDTLALKPMNCPAHCLMFAHRPRSWRELPVRLADFGVLHRAEASGSLGGLTRLWRFQQDDAHIFCAPSQLEAEIRGCLDFLRSVYSVLGFSFHLALSTRPPGFLGEPHLWDQAEKVLQQALEEFGEPWNLNPGDGAFYGPKIDVHLHDALGRPHQCGTIQLDFQLPLRFDLQYKGPAGAPECPVLIHRAVLGSVERLLGVLAESCGGRWPLWLSPFQVVVIPVRTEQEDYARQVQQCLQAAGLVSDLDADCGLTLSRRVRRAQLAHYNFQFVVGQREQSQMSVNVRTRDNRQLGERGLAESVQRLLELQDARVPNAEELF</sequence>
<comment type="function">
    <text evidence="2">Catalyzes the attachment of threonine to tRNA(Thr) in a two-step reaction: threonine is first activated by ATP to form Thr-AMP and then transferred to the acceptor end of tRNA(Thr). Also edits incorrectly charged tRNA(Thr) via its editing domain.</text>
</comment>
<comment type="catalytic activity">
    <reaction evidence="2">
        <text>tRNA(Thr) + L-threonine + ATP = L-threonyl-tRNA(Thr) + AMP + diphosphate + H(+)</text>
        <dbReference type="Rhea" id="RHEA:24624"/>
        <dbReference type="Rhea" id="RHEA-COMP:9670"/>
        <dbReference type="Rhea" id="RHEA-COMP:9704"/>
        <dbReference type="ChEBI" id="CHEBI:15378"/>
        <dbReference type="ChEBI" id="CHEBI:30616"/>
        <dbReference type="ChEBI" id="CHEBI:33019"/>
        <dbReference type="ChEBI" id="CHEBI:57926"/>
        <dbReference type="ChEBI" id="CHEBI:78442"/>
        <dbReference type="ChEBI" id="CHEBI:78534"/>
        <dbReference type="ChEBI" id="CHEBI:456215"/>
        <dbReference type="EC" id="6.1.1.3"/>
    </reaction>
</comment>
<comment type="subunit">
    <text evidence="2">Homodimer.</text>
</comment>
<comment type="subcellular location">
    <subcellularLocation>
        <location evidence="1">Mitochondrion matrix</location>
    </subcellularLocation>
</comment>
<comment type="similarity">
    <text evidence="5">Belongs to the class-II aminoacyl-tRNA synthetase family.</text>
</comment>
<protein>
    <recommendedName>
        <fullName>Threonine--tRNA ligase, mitochondrial</fullName>
        <ecNumber evidence="2">6.1.1.3</ecNumber>
    </recommendedName>
    <alternativeName>
        <fullName>Threonyl-tRNA synthetase</fullName>
        <shortName>ThrRS</shortName>
    </alternativeName>
    <alternativeName>
        <fullName>Threonyl-tRNA synthetase-like 1</fullName>
    </alternativeName>
</protein>